<name>RISB_HELPG</name>
<reference key="1">
    <citation type="journal article" date="2009" name="J. Bacteriol.">
        <title>The complete genome sequence of Helicobacter pylori strain G27.</title>
        <authorList>
            <person name="Baltrus D.A."/>
            <person name="Amieva M.R."/>
            <person name="Covacci A."/>
            <person name="Lowe T.M."/>
            <person name="Merrell D.S."/>
            <person name="Ottemann K.M."/>
            <person name="Stein M."/>
            <person name="Salama N.R."/>
            <person name="Guillemin K."/>
        </authorList>
    </citation>
    <scope>NUCLEOTIDE SEQUENCE [LARGE SCALE GENOMIC DNA]</scope>
    <source>
        <strain>G27</strain>
    </source>
</reference>
<keyword id="KW-1185">Reference proteome</keyword>
<keyword id="KW-0686">Riboflavin biosynthesis</keyword>
<keyword id="KW-0808">Transferase</keyword>
<comment type="function">
    <text evidence="1">Catalyzes the formation of 6,7-dimethyl-8-ribityllumazine by condensation of 5-amino-6-(D-ribitylamino)uracil with 3,4-dihydroxy-2-butanone 4-phosphate. This is the penultimate step in the biosynthesis of riboflavin.</text>
</comment>
<comment type="catalytic activity">
    <reaction evidence="1">
        <text>(2S)-2-hydroxy-3-oxobutyl phosphate + 5-amino-6-(D-ribitylamino)uracil = 6,7-dimethyl-8-(1-D-ribityl)lumazine + phosphate + 2 H2O + H(+)</text>
        <dbReference type="Rhea" id="RHEA:26152"/>
        <dbReference type="ChEBI" id="CHEBI:15377"/>
        <dbReference type="ChEBI" id="CHEBI:15378"/>
        <dbReference type="ChEBI" id="CHEBI:15934"/>
        <dbReference type="ChEBI" id="CHEBI:43474"/>
        <dbReference type="ChEBI" id="CHEBI:58201"/>
        <dbReference type="ChEBI" id="CHEBI:58830"/>
        <dbReference type="EC" id="2.5.1.78"/>
    </reaction>
</comment>
<comment type="pathway">
    <text evidence="1">Cofactor biosynthesis; riboflavin biosynthesis; riboflavin from 2-hydroxy-3-oxobutyl phosphate and 5-amino-6-(D-ribitylamino)uracil: step 1/2.</text>
</comment>
<comment type="similarity">
    <text evidence="1">Belongs to the DMRL synthase family.</text>
</comment>
<organism>
    <name type="scientific">Helicobacter pylori (strain G27)</name>
    <dbReference type="NCBI Taxonomy" id="563041"/>
    <lineage>
        <taxon>Bacteria</taxon>
        <taxon>Pseudomonadati</taxon>
        <taxon>Campylobacterota</taxon>
        <taxon>Epsilonproteobacteria</taxon>
        <taxon>Campylobacterales</taxon>
        <taxon>Helicobacteraceae</taxon>
        <taxon>Helicobacter</taxon>
    </lineage>
</organism>
<proteinExistence type="inferred from homology"/>
<feature type="chain" id="PRO_1000098197" description="6,7-dimethyl-8-ribityllumazine synthase">
    <location>
        <begin position="1"/>
        <end position="156"/>
    </location>
</feature>
<feature type="active site" description="Proton donor" evidence="1">
    <location>
        <position position="89"/>
    </location>
</feature>
<feature type="binding site" evidence="1">
    <location>
        <position position="23"/>
    </location>
    <ligand>
        <name>5-amino-6-(D-ribitylamino)uracil</name>
        <dbReference type="ChEBI" id="CHEBI:15934"/>
    </ligand>
</feature>
<feature type="binding site" evidence="1">
    <location>
        <begin position="57"/>
        <end position="59"/>
    </location>
    <ligand>
        <name>5-amino-6-(D-ribitylamino)uracil</name>
        <dbReference type="ChEBI" id="CHEBI:15934"/>
    </ligand>
</feature>
<feature type="binding site" evidence="1">
    <location>
        <begin position="81"/>
        <end position="83"/>
    </location>
    <ligand>
        <name>5-amino-6-(D-ribitylamino)uracil</name>
        <dbReference type="ChEBI" id="CHEBI:15934"/>
    </ligand>
</feature>
<feature type="binding site" evidence="1">
    <location>
        <begin position="86"/>
        <end position="87"/>
    </location>
    <ligand>
        <name>(2S)-2-hydroxy-3-oxobutyl phosphate</name>
        <dbReference type="ChEBI" id="CHEBI:58830"/>
    </ligand>
</feature>
<feature type="binding site" evidence="1">
    <location>
        <position position="114"/>
    </location>
    <ligand>
        <name>5-amino-6-(D-ribitylamino)uracil</name>
        <dbReference type="ChEBI" id="CHEBI:15934"/>
    </ligand>
</feature>
<feature type="binding site" evidence="1">
    <location>
        <position position="128"/>
    </location>
    <ligand>
        <name>(2S)-2-hydroxy-3-oxobutyl phosphate</name>
        <dbReference type="ChEBI" id="CHEBI:58830"/>
    </ligand>
</feature>
<dbReference type="EC" id="2.5.1.78" evidence="1"/>
<dbReference type="EMBL" id="CP001173">
    <property type="protein sequence ID" value="ACI26778.1"/>
    <property type="molecule type" value="Genomic_DNA"/>
</dbReference>
<dbReference type="RefSeq" id="WP_001165628.1">
    <property type="nucleotide sequence ID" value="NC_011333.1"/>
</dbReference>
<dbReference type="SMR" id="B5Z6D8"/>
<dbReference type="KEGG" id="hpg:HPG27_2"/>
<dbReference type="HOGENOM" id="CLU_089358_1_1_7"/>
<dbReference type="UniPathway" id="UPA00275">
    <property type="reaction ID" value="UER00404"/>
</dbReference>
<dbReference type="Proteomes" id="UP000001735">
    <property type="component" value="Chromosome"/>
</dbReference>
<dbReference type="GO" id="GO:0005829">
    <property type="term" value="C:cytosol"/>
    <property type="evidence" value="ECO:0007669"/>
    <property type="project" value="TreeGrafter"/>
</dbReference>
<dbReference type="GO" id="GO:0009349">
    <property type="term" value="C:riboflavin synthase complex"/>
    <property type="evidence" value="ECO:0007669"/>
    <property type="project" value="InterPro"/>
</dbReference>
<dbReference type="GO" id="GO:0000906">
    <property type="term" value="F:6,7-dimethyl-8-ribityllumazine synthase activity"/>
    <property type="evidence" value="ECO:0007669"/>
    <property type="project" value="UniProtKB-UniRule"/>
</dbReference>
<dbReference type="GO" id="GO:0009231">
    <property type="term" value="P:riboflavin biosynthetic process"/>
    <property type="evidence" value="ECO:0007669"/>
    <property type="project" value="UniProtKB-UniRule"/>
</dbReference>
<dbReference type="CDD" id="cd09209">
    <property type="entry name" value="Lumazine_synthase-I"/>
    <property type="match status" value="1"/>
</dbReference>
<dbReference type="FunFam" id="3.40.50.960:FF:000001">
    <property type="entry name" value="6,7-dimethyl-8-ribityllumazine synthase"/>
    <property type="match status" value="1"/>
</dbReference>
<dbReference type="Gene3D" id="3.40.50.960">
    <property type="entry name" value="Lumazine/riboflavin synthase"/>
    <property type="match status" value="1"/>
</dbReference>
<dbReference type="HAMAP" id="MF_00178">
    <property type="entry name" value="Lumazine_synth"/>
    <property type="match status" value="1"/>
</dbReference>
<dbReference type="InterPro" id="IPR034964">
    <property type="entry name" value="LS"/>
</dbReference>
<dbReference type="InterPro" id="IPR002180">
    <property type="entry name" value="LS/RS"/>
</dbReference>
<dbReference type="InterPro" id="IPR036467">
    <property type="entry name" value="LS/RS_sf"/>
</dbReference>
<dbReference type="NCBIfam" id="TIGR00114">
    <property type="entry name" value="lumazine-synth"/>
    <property type="match status" value="1"/>
</dbReference>
<dbReference type="PANTHER" id="PTHR21058:SF0">
    <property type="entry name" value="6,7-DIMETHYL-8-RIBITYLLUMAZINE SYNTHASE"/>
    <property type="match status" value="1"/>
</dbReference>
<dbReference type="PANTHER" id="PTHR21058">
    <property type="entry name" value="6,7-DIMETHYL-8-RIBITYLLUMAZINE SYNTHASE DMRL SYNTHASE LUMAZINE SYNTHASE"/>
    <property type="match status" value="1"/>
</dbReference>
<dbReference type="Pfam" id="PF00885">
    <property type="entry name" value="DMRL_synthase"/>
    <property type="match status" value="1"/>
</dbReference>
<dbReference type="SUPFAM" id="SSF52121">
    <property type="entry name" value="Lumazine synthase"/>
    <property type="match status" value="1"/>
</dbReference>
<evidence type="ECO:0000255" key="1">
    <source>
        <dbReference type="HAMAP-Rule" id="MF_00178"/>
    </source>
</evidence>
<sequence length="156" mass="16972">MQIIEGKLQLQGNERVAILTSRFNHIITDRLKEGAMDCFKRHGGDEKLLDIVLVPGAYELPLILDKLLESEKYDGVCVLGAIIRGGTPHFDYVSAEATKGIASAMLKYSMPVSFGVLTTDNIEQAIERAGSKAGNKGFEAMSTLIELLSLCQTLKG</sequence>
<protein>
    <recommendedName>
        <fullName evidence="1">6,7-dimethyl-8-ribityllumazine synthase</fullName>
        <shortName evidence="1">DMRL synthase</shortName>
        <shortName evidence="1">LS</shortName>
        <shortName evidence="1">Lumazine synthase</shortName>
        <ecNumber evidence="1">2.5.1.78</ecNumber>
    </recommendedName>
</protein>
<accession>B5Z6D8</accession>
<gene>
    <name evidence="1" type="primary">ribH</name>
    <name type="ordered locus">HPG27_2</name>
</gene>